<comment type="function">
    <text evidence="1">Component of the acetyl coenzyme A carboxylase (ACC) complex. Biotin carboxylase (BC) catalyzes the carboxylation of biotin on its carrier protein (BCCP) and then the CO(2) group is transferred by the transcarboxylase to acetyl-CoA to form malonyl-CoA.</text>
</comment>
<comment type="catalytic activity">
    <reaction evidence="1">
        <text>N(6)-carboxybiotinyl-L-lysyl-[protein] + acetyl-CoA = N(6)-biotinyl-L-lysyl-[protein] + malonyl-CoA</text>
        <dbReference type="Rhea" id="RHEA:54728"/>
        <dbReference type="Rhea" id="RHEA-COMP:10505"/>
        <dbReference type="Rhea" id="RHEA-COMP:10506"/>
        <dbReference type="ChEBI" id="CHEBI:57288"/>
        <dbReference type="ChEBI" id="CHEBI:57384"/>
        <dbReference type="ChEBI" id="CHEBI:83144"/>
        <dbReference type="ChEBI" id="CHEBI:83145"/>
        <dbReference type="EC" id="2.1.3.15"/>
    </reaction>
</comment>
<comment type="cofactor">
    <cofactor evidence="1">
        <name>Zn(2+)</name>
        <dbReference type="ChEBI" id="CHEBI:29105"/>
    </cofactor>
    <text evidence="1">Binds 1 zinc ion per subunit.</text>
</comment>
<comment type="pathway">
    <text evidence="1">Lipid metabolism; malonyl-CoA biosynthesis; malonyl-CoA from acetyl-CoA: step 1/1.</text>
</comment>
<comment type="subunit">
    <text evidence="1">Acetyl-CoA carboxylase is a heterohexamer composed of biotin carboxyl carrier protein (AccB), biotin carboxylase (AccC) and two subunits each of ACCase subunit alpha (AccA) and ACCase subunit beta (AccD).</text>
</comment>
<comment type="subcellular location">
    <subcellularLocation>
        <location evidence="1">Cytoplasm</location>
    </subcellularLocation>
</comment>
<comment type="similarity">
    <text evidence="1">Belongs to the AccD/PCCB family.</text>
</comment>
<accession>Q633J6</accession>
<reference key="1">
    <citation type="journal article" date="2006" name="J. Bacteriol.">
        <title>Pathogenomic sequence analysis of Bacillus cereus and Bacillus thuringiensis isolates closely related to Bacillus anthracis.</title>
        <authorList>
            <person name="Han C.S."/>
            <person name="Xie G."/>
            <person name="Challacombe J.F."/>
            <person name="Altherr M.R."/>
            <person name="Bhotika S.S."/>
            <person name="Bruce D."/>
            <person name="Campbell C.S."/>
            <person name="Campbell M.L."/>
            <person name="Chen J."/>
            <person name="Chertkov O."/>
            <person name="Cleland C."/>
            <person name="Dimitrijevic M."/>
            <person name="Doggett N.A."/>
            <person name="Fawcett J.J."/>
            <person name="Glavina T."/>
            <person name="Goodwin L.A."/>
            <person name="Hill K.K."/>
            <person name="Hitchcock P."/>
            <person name="Jackson P.J."/>
            <person name="Keim P."/>
            <person name="Kewalramani A.R."/>
            <person name="Longmire J."/>
            <person name="Lucas S."/>
            <person name="Malfatti S."/>
            <person name="McMurry K."/>
            <person name="Meincke L.J."/>
            <person name="Misra M."/>
            <person name="Moseman B.L."/>
            <person name="Mundt M."/>
            <person name="Munk A.C."/>
            <person name="Okinaka R.T."/>
            <person name="Parson-Quintana B."/>
            <person name="Reilly L.P."/>
            <person name="Richardson P."/>
            <person name="Robinson D.L."/>
            <person name="Rubin E."/>
            <person name="Saunders E."/>
            <person name="Tapia R."/>
            <person name="Tesmer J.G."/>
            <person name="Thayer N."/>
            <person name="Thompson L.S."/>
            <person name="Tice H."/>
            <person name="Ticknor L.O."/>
            <person name="Wills P.L."/>
            <person name="Brettin T.S."/>
            <person name="Gilna P."/>
        </authorList>
    </citation>
    <scope>NUCLEOTIDE SEQUENCE [LARGE SCALE GENOMIC DNA]</scope>
    <source>
        <strain>ZK / E33L</strain>
    </source>
</reference>
<protein>
    <recommendedName>
        <fullName evidence="1">Acetyl-coenzyme A carboxylase carboxyl transferase subunit beta</fullName>
        <shortName evidence="1">ACCase subunit beta</shortName>
        <shortName evidence="1">Acetyl-CoA carboxylase carboxyltransferase subunit beta</shortName>
        <ecNumber evidence="1">2.1.3.15</ecNumber>
    </recommendedName>
</protein>
<evidence type="ECO:0000255" key="1">
    <source>
        <dbReference type="HAMAP-Rule" id="MF_01395"/>
    </source>
</evidence>
<evidence type="ECO:0000255" key="2">
    <source>
        <dbReference type="PROSITE-ProRule" id="PRU01136"/>
    </source>
</evidence>
<proteinExistence type="inferred from homology"/>
<organism>
    <name type="scientific">Bacillus cereus (strain ZK / E33L)</name>
    <dbReference type="NCBI Taxonomy" id="288681"/>
    <lineage>
        <taxon>Bacteria</taxon>
        <taxon>Bacillati</taxon>
        <taxon>Bacillota</taxon>
        <taxon>Bacilli</taxon>
        <taxon>Bacillales</taxon>
        <taxon>Bacillaceae</taxon>
        <taxon>Bacillus</taxon>
        <taxon>Bacillus cereus group</taxon>
    </lineage>
</organism>
<dbReference type="EC" id="2.1.3.15" evidence="1"/>
<dbReference type="EMBL" id="CP000001">
    <property type="protein sequence ID" value="AAU15925.1"/>
    <property type="molecule type" value="Genomic_DNA"/>
</dbReference>
<dbReference type="RefSeq" id="WP_000942869.1">
    <property type="nucleotide sequence ID" value="NZ_CP009968.1"/>
</dbReference>
<dbReference type="SMR" id="Q633J6"/>
<dbReference type="KEGG" id="bcz:BCE33L4342"/>
<dbReference type="PATRIC" id="fig|288681.22.peg.1030"/>
<dbReference type="UniPathway" id="UPA00655">
    <property type="reaction ID" value="UER00711"/>
</dbReference>
<dbReference type="Proteomes" id="UP000002612">
    <property type="component" value="Chromosome"/>
</dbReference>
<dbReference type="GO" id="GO:0009317">
    <property type="term" value="C:acetyl-CoA carboxylase complex"/>
    <property type="evidence" value="ECO:0007669"/>
    <property type="project" value="InterPro"/>
</dbReference>
<dbReference type="GO" id="GO:0003989">
    <property type="term" value="F:acetyl-CoA carboxylase activity"/>
    <property type="evidence" value="ECO:0007669"/>
    <property type="project" value="InterPro"/>
</dbReference>
<dbReference type="GO" id="GO:0005524">
    <property type="term" value="F:ATP binding"/>
    <property type="evidence" value="ECO:0007669"/>
    <property type="project" value="UniProtKB-KW"/>
</dbReference>
<dbReference type="GO" id="GO:0016743">
    <property type="term" value="F:carboxyl- or carbamoyltransferase activity"/>
    <property type="evidence" value="ECO:0007669"/>
    <property type="project" value="UniProtKB-UniRule"/>
</dbReference>
<dbReference type="GO" id="GO:0008270">
    <property type="term" value="F:zinc ion binding"/>
    <property type="evidence" value="ECO:0007669"/>
    <property type="project" value="UniProtKB-UniRule"/>
</dbReference>
<dbReference type="GO" id="GO:0006633">
    <property type="term" value="P:fatty acid biosynthetic process"/>
    <property type="evidence" value="ECO:0007669"/>
    <property type="project" value="UniProtKB-KW"/>
</dbReference>
<dbReference type="GO" id="GO:2001295">
    <property type="term" value="P:malonyl-CoA biosynthetic process"/>
    <property type="evidence" value="ECO:0007669"/>
    <property type="project" value="UniProtKB-UniRule"/>
</dbReference>
<dbReference type="Gene3D" id="3.90.226.10">
    <property type="entry name" value="2-enoyl-CoA Hydratase, Chain A, domain 1"/>
    <property type="match status" value="1"/>
</dbReference>
<dbReference type="HAMAP" id="MF_01395">
    <property type="entry name" value="AcetylCoA_CT_beta"/>
    <property type="match status" value="1"/>
</dbReference>
<dbReference type="InterPro" id="IPR034733">
    <property type="entry name" value="AcCoA_carboxyl_beta"/>
</dbReference>
<dbReference type="InterPro" id="IPR000438">
    <property type="entry name" value="Acetyl_CoA_COase_Trfase_b_su"/>
</dbReference>
<dbReference type="InterPro" id="IPR029045">
    <property type="entry name" value="ClpP/crotonase-like_dom_sf"/>
</dbReference>
<dbReference type="InterPro" id="IPR011762">
    <property type="entry name" value="COA_CT_N"/>
</dbReference>
<dbReference type="InterPro" id="IPR041010">
    <property type="entry name" value="Znf-ACC"/>
</dbReference>
<dbReference type="NCBIfam" id="TIGR00515">
    <property type="entry name" value="accD"/>
    <property type="match status" value="1"/>
</dbReference>
<dbReference type="PANTHER" id="PTHR42995">
    <property type="entry name" value="ACETYL-COENZYME A CARBOXYLASE CARBOXYL TRANSFERASE SUBUNIT BETA, CHLOROPLASTIC"/>
    <property type="match status" value="1"/>
</dbReference>
<dbReference type="PANTHER" id="PTHR42995:SF5">
    <property type="entry name" value="ACETYL-COENZYME A CARBOXYLASE CARBOXYL TRANSFERASE SUBUNIT BETA, CHLOROPLASTIC"/>
    <property type="match status" value="1"/>
</dbReference>
<dbReference type="Pfam" id="PF01039">
    <property type="entry name" value="Carboxyl_trans"/>
    <property type="match status" value="1"/>
</dbReference>
<dbReference type="Pfam" id="PF17848">
    <property type="entry name" value="Zn_ribbon_ACC"/>
    <property type="match status" value="1"/>
</dbReference>
<dbReference type="PRINTS" id="PR01070">
    <property type="entry name" value="ACCCTRFRASEB"/>
</dbReference>
<dbReference type="SUPFAM" id="SSF52096">
    <property type="entry name" value="ClpP/crotonase"/>
    <property type="match status" value="1"/>
</dbReference>
<dbReference type="PROSITE" id="PS50980">
    <property type="entry name" value="COA_CT_NTER"/>
    <property type="match status" value="1"/>
</dbReference>
<name>ACCD_BACCZ</name>
<keyword id="KW-0067">ATP-binding</keyword>
<keyword id="KW-0963">Cytoplasm</keyword>
<keyword id="KW-0275">Fatty acid biosynthesis</keyword>
<keyword id="KW-0276">Fatty acid metabolism</keyword>
<keyword id="KW-0444">Lipid biosynthesis</keyword>
<keyword id="KW-0443">Lipid metabolism</keyword>
<keyword id="KW-0479">Metal-binding</keyword>
<keyword id="KW-0547">Nucleotide-binding</keyword>
<keyword id="KW-0808">Transferase</keyword>
<keyword id="KW-0862">Zinc</keyword>
<keyword id="KW-0863">Zinc-finger</keyword>
<feature type="chain" id="PRO_0000389680" description="Acetyl-coenzyme A carboxylase carboxyl transferase subunit beta">
    <location>
        <begin position="1"/>
        <end position="289"/>
    </location>
</feature>
<feature type="domain" description="CoA carboxyltransferase N-terminal" evidence="2">
    <location>
        <begin position="28"/>
        <end position="289"/>
    </location>
</feature>
<feature type="zinc finger region" description="C4-type" evidence="1">
    <location>
        <begin position="32"/>
        <end position="54"/>
    </location>
</feature>
<feature type="binding site" evidence="1">
    <location>
        <position position="32"/>
    </location>
    <ligand>
        <name>Zn(2+)</name>
        <dbReference type="ChEBI" id="CHEBI:29105"/>
    </ligand>
</feature>
<feature type="binding site" evidence="1">
    <location>
        <position position="35"/>
    </location>
    <ligand>
        <name>Zn(2+)</name>
        <dbReference type="ChEBI" id="CHEBI:29105"/>
    </ligand>
</feature>
<feature type="binding site" evidence="1">
    <location>
        <position position="51"/>
    </location>
    <ligand>
        <name>Zn(2+)</name>
        <dbReference type="ChEBI" id="CHEBI:29105"/>
    </ligand>
</feature>
<feature type="binding site" evidence="1">
    <location>
        <position position="54"/>
    </location>
    <ligand>
        <name>Zn(2+)</name>
        <dbReference type="ChEBI" id="CHEBI:29105"/>
    </ligand>
</feature>
<sequence length="289" mass="32268">MLRDLFVKKKKYAAIPSEQVRKDVPDGVMTKCPKCKKIMYTKEVLKNLKVCVNCGYHHPMNAWERLDSILDEGSFREYDKEMVSLNPLEFPDYEEKLESDRKKTDLNEAVVTGEGTIDDMLVVVAVMDSRFRMGSMGSVVGEKIARAVEKAYDLQVPFIIFTASGGARMQEGILSLMQMAKTSVALKKHSNAGGLFISVMTHPTTGGVSASFASLGDYNLAEPGALIGFAGRRVIEQTVREKLPEDFQTAEFLLEHGQLDAVVHRDDMRESLRKILEVHQGGEMAVWQS</sequence>
<gene>
    <name evidence="1" type="primary">accD</name>
    <name type="ordered locus">BCE33L4342</name>
</gene>